<gene>
    <name evidence="1" type="primary">alaS</name>
    <name type="ordered locus">BURPS1710b_1815</name>
</gene>
<comment type="function">
    <text evidence="1">Catalyzes the attachment of alanine to tRNA(Ala) in a two-step reaction: alanine is first activated by ATP to form Ala-AMP and then transferred to the acceptor end of tRNA(Ala). Also edits incorrectly charged Ser-tRNA(Ala) and Gly-tRNA(Ala) via its editing domain.</text>
</comment>
<comment type="catalytic activity">
    <reaction evidence="1">
        <text>tRNA(Ala) + L-alanine + ATP = L-alanyl-tRNA(Ala) + AMP + diphosphate</text>
        <dbReference type="Rhea" id="RHEA:12540"/>
        <dbReference type="Rhea" id="RHEA-COMP:9657"/>
        <dbReference type="Rhea" id="RHEA-COMP:9923"/>
        <dbReference type="ChEBI" id="CHEBI:30616"/>
        <dbReference type="ChEBI" id="CHEBI:33019"/>
        <dbReference type="ChEBI" id="CHEBI:57972"/>
        <dbReference type="ChEBI" id="CHEBI:78442"/>
        <dbReference type="ChEBI" id="CHEBI:78497"/>
        <dbReference type="ChEBI" id="CHEBI:456215"/>
        <dbReference type="EC" id="6.1.1.7"/>
    </reaction>
</comment>
<comment type="cofactor">
    <cofactor evidence="1">
        <name>Zn(2+)</name>
        <dbReference type="ChEBI" id="CHEBI:29105"/>
    </cofactor>
    <text evidence="1">Binds 1 zinc ion per subunit.</text>
</comment>
<comment type="subcellular location">
    <subcellularLocation>
        <location evidence="1">Cytoplasm</location>
    </subcellularLocation>
</comment>
<comment type="domain">
    <text evidence="1">Consists of three domains; the N-terminal catalytic domain, the editing domain and the C-terminal C-Ala domain. The editing domain removes incorrectly charged amino acids, while the C-Ala domain, along with tRNA(Ala), serves as a bridge to cooperatively bring together the editing and aminoacylation centers thus stimulating deacylation of misacylated tRNAs.</text>
</comment>
<comment type="similarity">
    <text evidence="1">Belongs to the class-II aminoacyl-tRNA synthetase family.</text>
</comment>
<accession>Q3JT87</accession>
<dbReference type="EC" id="6.1.1.7" evidence="1"/>
<dbReference type="EMBL" id="CP000124">
    <property type="protein sequence ID" value="ABA51163.1"/>
    <property type="molecule type" value="Genomic_DNA"/>
</dbReference>
<dbReference type="RefSeq" id="WP_004204967.1">
    <property type="nucleotide sequence ID" value="NC_007434.1"/>
</dbReference>
<dbReference type="SMR" id="Q3JT87"/>
<dbReference type="EnsemblBacteria" id="ABA51163">
    <property type="protein sequence ID" value="ABA51163"/>
    <property type="gene ID" value="BURPS1710b_1815"/>
</dbReference>
<dbReference type="GeneID" id="93059980"/>
<dbReference type="KEGG" id="bpm:BURPS1710b_1815"/>
<dbReference type="HOGENOM" id="CLU_004485_1_1_4"/>
<dbReference type="Proteomes" id="UP000002700">
    <property type="component" value="Chromosome I"/>
</dbReference>
<dbReference type="GO" id="GO:0005829">
    <property type="term" value="C:cytosol"/>
    <property type="evidence" value="ECO:0007669"/>
    <property type="project" value="TreeGrafter"/>
</dbReference>
<dbReference type="GO" id="GO:0004813">
    <property type="term" value="F:alanine-tRNA ligase activity"/>
    <property type="evidence" value="ECO:0007669"/>
    <property type="project" value="UniProtKB-UniRule"/>
</dbReference>
<dbReference type="GO" id="GO:0002161">
    <property type="term" value="F:aminoacyl-tRNA deacylase activity"/>
    <property type="evidence" value="ECO:0007669"/>
    <property type="project" value="TreeGrafter"/>
</dbReference>
<dbReference type="GO" id="GO:0005524">
    <property type="term" value="F:ATP binding"/>
    <property type="evidence" value="ECO:0007669"/>
    <property type="project" value="UniProtKB-UniRule"/>
</dbReference>
<dbReference type="GO" id="GO:0000049">
    <property type="term" value="F:tRNA binding"/>
    <property type="evidence" value="ECO:0007669"/>
    <property type="project" value="UniProtKB-KW"/>
</dbReference>
<dbReference type="GO" id="GO:0008270">
    <property type="term" value="F:zinc ion binding"/>
    <property type="evidence" value="ECO:0007669"/>
    <property type="project" value="UniProtKB-UniRule"/>
</dbReference>
<dbReference type="GO" id="GO:0006419">
    <property type="term" value="P:alanyl-tRNA aminoacylation"/>
    <property type="evidence" value="ECO:0007669"/>
    <property type="project" value="UniProtKB-UniRule"/>
</dbReference>
<dbReference type="GO" id="GO:0045892">
    <property type="term" value="P:negative regulation of DNA-templated transcription"/>
    <property type="evidence" value="ECO:0007669"/>
    <property type="project" value="TreeGrafter"/>
</dbReference>
<dbReference type="CDD" id="cd00673">
    <property type="entry name" value="AlaRS_core"/>
    <property type="match status" value="1"/>
</dbReference>
<dbReference type="FunFam" id="2.40.30.130:FF:000001">
    <property type="entry name" value="Alanine--tRNA ligase"/>
    <property type="match status" value="1"/>
</dbReference>
<dbReference type="FunFam" id="3.10.310.40:FF:000001">
    <property type="entry name" value="Alanine--tRNA ligase"/>
    <property type="match status" value="1"/>
</dbReference>
<dbReference type="FunFam" id="3.30.54.20:FF:000001">
    <property type="entry name" value="Alanine--tRNA ligase"/>
    <property type="match status" value="1"/>
</dbReference>
<dbReference type="FunFam" id="3.30.930.10:FF:000004">
    <property type="entry name" value="Alanine--tRNA ligase"/>
    <property type="match status" value="1"/>
</dbReference>
<dbReference type="FunFam" id="3.30.980.10:FF:000004">
    <property type="entry name" value="Alanine--tRNA ligase, cytoplasmic"/>
    <property type="match status" value="1"/>
</dbReference>
<dbReference type="Gene3D" id="2.40.30.130">
    <property type="match status" value="1"/>
</dbReference>
<dbReference type="Gene3D" id="3.10.310.40">
    <property type="match status" value="1"/>
</dbReference>
<dbReference type="Gene3D" id="3.30.54.20">
    <property type="match status" value="1"/>
</dbReference>
<dbReference type="Gene3D" id="6.10.250.550">
    <property type="match status" value="1"/>
</dbReference>
<dbReference type="Gene3D" id="3.30.930.10">
    <property type="entry name" value="Bira Bifunctional Protein, Domain 2"/>
    <property type="match status" value="1"/>
</dbReference>
<dbReference type="Gene3D" id="3.30.980.10">
    <property type="entry name" value="Threonyl-trna Synthetase, Chain A, domain 2"/>
    <property type="match status" value="1"/>
</dbReference>
<dbReference type="HAMAP" id="MF_00036_B">
    <property type="entry name" value="Ala_tRNA_synth_B"/>
    <property type="match status" value="1"/>
</dbReference>
<dbReference type="InterPro" id="IPR045864">
    <property type="entry name" value="aa-tRNA-synth_II/BPL/LPL"/>
</dbReference>
<dbReference type="InterPro" id="IPR002318">
    <property type="entry name" value="Ala-tRNA-lgiase_IIc"/>
</dbReference>
<dbReference type="InterPro" id="IPR018162">
    <property type="entry name" value="Ala-tRNA-ligase_IIc_anticod-bd"/>
</dbReference>
<dbReference type="InterPro" id="IPR018165">
    <property type="entry name" value="Ala-tRNA-synth_IIc_core"/>
</dbReference>
<dbReference type="InterPro" id="IPR018164">
    <property type="entry name" value="Ala-tRNA-synth_IIc_N"/>
</dbReference>
<dbReference type="InterPro" id="IPR050058">
    <property type="entry name" value="Ala-tRNA_ligase"/>
</dbReference>
<dbReference type="InterPro" id="IPR023033">
    <property type="entry name" value="Ala_tRNA_ligase_euk/bac"/>
</dbReference>
<dbReference type="InterPro" id="IPR003156">
    <property type="entry name" value="DHHA1_dom"/>
</dbReference>
<dbReference type="InterPro" id="IPR018163">
    <property type="entry name" value="Thr/Ala-tRNA-synth_IIc_edit"/>
</dbReference>
<dbReference type="InterPro" id="IPR009000">
    <property type="entry name" value="Transl_B-barrel_sf"/>
</dbReference>
<dbReference type="InterPro" id="IPR012947">
    <property type="entry name" value="tRNA_SAD"/>
</dbReference>
<dbReference type="NCBIfam" id="TIGR00344">
    <property type="entry name" value="alaS"/>
    <property type="match status" value="1"/>
</dbReference>
<dbReference type="PANTHER" id="PTHR11777:SF9">
    <property type="entry name" value="ALANINE--TRNA LIGASE, CYTOPLASMIC"/>
    <property type="match status" value="1"/>
</dbReference>
<dbReference type="PANTHER" id="PTHR11777">
    <property type="entry name" value="ALANYL-TRNA SYNTHETASE"/>
    <property type="match status" value="1"/>
</dbReference>
<dbReference type="Pfam" id="PF02272">
    <property type="entry name" value="DHHA1"/>
    <property type="match status" value="1"/>
</dbReference>
<dbReference type="Pfam" id="PF01411">
    <property type="entry name" value="tRNA-synt_2c"/>
    <property type="match status" value="1"/>
</dbReference>
<dbReference type="Pfam" id="PF07973">
    <property type="entry name" value="tRNA_SAD"/>
    <property type="match status" value="1"/>
</dbReference>
<dbReference type="PRINTS" id="PR00980">
    <property type="entry name" value="TRNASYNTHALA"/>
</dbReference>
<dbReference type="SMART" id="SM00863">
    <property type="entry name" value="tRNA_SAD"/>
    <property type="match status" value="1"/>
</dbReference>
<dbReference type="SUPFAM" id="SSF55681">
    <property type="entry name" value="Class II aaRS and biotin synthetases"/>
    <property type="match status" value="1"/>
</dbReference>
<dbReference type="SUPFAM" id="SSF101353">
    <property type="entry name" value="Putative anticodon-binding domain of alanyl-tRNA synthetase (AlaRS)"/>
    <property type="match status" value="1"/>
</dbReference>
<dbReference type="SUPFAM" id="SSF55186">
    <property type="entry name" value="ThrRS/AlaRS common domain"/>
    <property type="match status" value="1"/>
</dbReference>
<dbReference type="SUPFAM" id="SSF50447">
    <property type="entry name" value="Translation proteins"/>
    <property type="match status" value="1"/>
</dbReference>
<dbReference type="PROSITE" id="PS50860">
    <property type="entry name" value="AA_TRNA_LIGASE_II_ALA"/>
    <property type="match status" value="1"/>
</dbReference>
<name>SYA_BURP1</name>
<keyword id="KW-0030">Aminoacyl-tRNA synthetase</keyword>
<keyword id="KW-0067">ATP-binding</keyword>
<keyword id="KW-0963">Cytoplasm</keyword>
<keyword id="KW-0436">Ligase</keyword>
<keyword id="KW-0479">Metal-binding</keyword>
<keyword id="KW-0547">Nucleotide-binding</keyword>
<keyword id="KW-0648">Protein biosynthesis</keyword>
<keyword id="KW-0694">RNA-binding</keyword>
<keyword id="KW-0820">tRNA-binding</keyword>
<keyword id="KW-0862">Zinc</keyword>
<proteinExistence type="inferred from homology"/>
<evidence type="ECO:0000255" key="1">
    <source>
        <dbReference type="HAMAP-Rule" id="MF_00036"/>
    </source>
</evidence>
<protein>
    <recommendedName>
        <fullName evidence="1">Alanine--tRNA ligase</fullName>
        <ecNumber evidence="1">6.1.1.7</ecNumber>
    </recommendedName>
    <alternativeName>
        <fullName evidence="1">Alanyl-tRNA synthetase</fullName>
        <shortName evidence="1">AlaRS</shortName>
    </alternativeName>
</protein>
<sequence length="874" mass="94695">MKAAEIREKFLKFFESKGHTIVRSSSLVPGNDPTLLFTNSGMVQFKDVFLGAETRPYSRATTAQRSVRAGGKHNDLENVGYTARHHTFFEMLGNFSFGDYFKRDAIHYAWELLTSVYKLPADKLWVTVYHDDDEAYDIWAKEVGVPAERIIRIGDNKGARYASDNFWQMGDTGPCGPCSEIFYDHGPDVWGGPPGSPEEDGDRYIEIWNLVFMQFNRDAQGNMTRLPKPCVDTGMGLERIAAVLQHVHSNYEIDLFQQLIKASARETGVADLANNSLKVIADHIRACSFLIVDGVIPGNEGRGYVLRRIVRRAIRHGYKLGRKAPFFHKLVADLVAEMGAAYPELKEAEPRVTDVLRQEEERFFETIEHGMSILEAALAELDAAGGKTLDGELAFKLHDTYGFPLDLTADVCRERGVTVDEPAFDDAMARQREQARAAGKFKATQGLEYTGAKTTFHGYEEIAFDDAKVVALYVEGASVGEVKAGESAVVVLDHTPFYAESGGQVGDQGVLANAATRFAVGDTLKVQADVIGHHGELEQGTLKVGDVVRAEIDAARRARTARNHSATHLMHKALRDVLGSHVQQKGSLVDADKTRFDFAHNAPLTDDEIRRVEAIVNEQVLANAPGIVRVMPYDDAVKGGAMALFGEKYGDEVRVLDLGFSRELCGGTHVHRTGDIGLFKIVAEGGVAAGIRRVEAITGDNAVRYVQALDARVNAAAAALKAQPSELLQRIGQVQDQVKSLEKELGALKSKLASSQGDELAQQAVEVGGVHVLAATLDGADAKTLRETVDKLKDKLKSAAIVLAAVDGGKVSLIAGVTADASKKVKAGELVNFVAQQVGGKGGGRPDMAQAGGTEPAKLPAALAGVKGWVEARL</sequence>
<organism>
    <name type="scientific">Burkholderia pseudomallei (strain 1710b)</name>
    <dbReference type="NCBI Taxonomy" id="320372"/>
    <lineage>
        <taxon>Bacteria</taxon>
        <taxon>Pseudomonadati</taxon>
        <taxon>Pseudomonadota</taxon>
        <taxon>Betaproteobacteria</taxon>
        <taxon>Burkholderiales</taxon>
        <taxon>Burkholderiaceae</taxon>
        <taxon>Burkholderia</taxon>
        <taxon>pseudomallei group</taxon>
    </lineage>
</organism>
<reference key="1">
    <citation type="journal article" date="2010" name="Genome Biol. Evol.">
        <title>Continuing evolution of Burkholderia mallei through genome reduction and large-scale rearrangements.</title>
        <authorList>
            <person name="Losada L."/>
            <person name="Ronning C.M."/>
            <person name="DeShazer D."/>
            <person name="Woods D."/>
            <person name="Fedorova N."/>
            <person name="Kim H.S."/>
            <person name="Shabalina S.A."/>
            <person name="Pearson T.R."/>
            <person name="Brinkac L."/>
            <person name="Tan P."/>
            <person name="Nandi T."/>
            <person name="Crabtree J."/>
            <person name="Badger J."/>
            <person name="Beckstrom-Sternberg S."/>
            <person name="Saqib M."/>
            <person name="Schutzer S.E."/>
            <person name="Keim P."/>
            <person name="Nierman W.C."/>
        </authorList>
    </citation>
    <scope>NUCLEOTIDE SEQUENCE [LARGE SCALE GENOMIC DNA]</scope>
    <source>
        <strain>1710b</strain>
    </source>
</reference>
<feature type="chain" id="PRO_0000347531" description="Alanine--tRNA ligase">
    <location>
        <begin position="1"/>
        <end position="874"/>
    </location>
</feature>
<feature type="binding site" evidence="1">
    <location>
        <position position="564"/>
    </location>
    <ligand>
        <name>Zn(2+)</name>
        <dbReference type="ChEBI" id="CHEBI:29105"/>
    </ligand>
</feature>
<feature type="binding site" evidence="1">
    <location>
        <position position="568"/>
    </location>
    <ligand>
        <name>Zn(2+)</name>
        <dbReference type="ChEBI" id="CHEBI:29105"/>
    </ligand>
</feature>
<feature type="binding site" evidence="1">
    <location>
        <position position="665"/>
    </location>
    <ligand>
        <name>Zn(2+)</name>
        <dbReference type="ChEBI" id="CHEBI:29105"/>
    </ligand>
</feature>
<feature type="binding site" evidence="1">
    <location>
        <position position="669"/>
    </location>
    <ligand>
        <name>Zn(2+)</name>
        <dbReference type="ChEBI" id="CHEBI:29105"/>
    </ligand>
</feature>